<comment type="catalytic activity">
    <reaction>
        <text>L-seryl-[protein] + ATP = O-phospho-L-seryl-[protein] + ADP + H(+)</text>
        <dbReference type="Rhea" id="RHEA:17989"/>
        <dbReference type="Rhea" id="RHEA-COMP:9863"/>
        <dbReference type="Rhea" id="RHEA-COMP:11604"/>
        <dbReference type="ChEBI" id="CHEBI:15378"/>
        <dbReference type="ChEBI" id="CHEBI:29999"/>
        <dbReference type="ChEBI" id="CHEBI:30616"/>
        <dbReference type="ChEBI" id="CHEBI:83421"/>
        <dbReference type="ChEBI" id="CHEBI:456216"/>
        <dbReference type="EC" id="2.7.11.1"/>
    </reaction>
</comment>
<comment type="catalytic activity">
    <reaction>
        <text>L-threonyl-[protein] + ATP = O-phospho-L-threonyl-[protein] + ADP + H(+)</text>
        <dbReference type="Rhea" id="RHEA:46608"/>
        <dbReference type="Rhea" id="RHEA-COMP:11060"/>
        <dbReference type="Rhea" id="RHEA-COMP:11605"/>
        <dbReference type="ChEBI" id="CHEBI:15378"/>
        <dbReference type="ChEBI" id="CHEBI:30013"/>
        <dbReference type="ChEBI" id="CHEBI:30616"/>
        <dbReference type="ChEBI" id="CHEBI:61977"/>
        <dbReference type="ChEBI" id="CHEBI:456216"/>
        <dbReference type="EC" id="2.7.11.1"/>
    </reaction>
</comment>
<comment type="domain">
    <text evidence="1">The PIF-pocket is a small lobe in the catalytic domain required by the enzyme for the binding to the hydrophobic motif of its substrates. It is an allosteric regulatory site that can accommodate small compounds acting as allosteric inhibitors.</text>
</comment>
<comment type="similarity">
    <text evidence="5">Belongs to the protein kinase superfamily. AGC Ser/Thr protein kinase family. PDPK1 subfamily.</text>
</comment>
<reference key="1">
    <citation type="journal article" date="2005" name="Nature">
        <title>The genome of the social amoeba Dictyostelium discoideum.</title>
        <authorList>
            <person name="Eichinger L."/>
            <person name="Pachebat J.A."/>
            <person name="Gloeckner G."/>
            <person name="Rajandream M.A."/>
            <person name="Sucgang R."/>
            <person name="Berriman M."/>
            <person name="Song J."/>
            <person name="Olsen R."/>
            <person name="Szafranski K."/>
            <person name="Xu Q."/>
            <person name="Tunggal B."/>
            <person name="Kummerfeld S."/>
            <person name="Madera M."/>
            <person name="Konfortov B.A."/>
            <person name="Rivero F."/>
            <person name="Bankier A.T."/>
            <person name="Lehmann R."/>
            <person name="Hamlin N."/>
            <person name="Davies R."/>
            <person name="Gaudet P."/>
            <person name="Fey P."/>
            <person name="Pilcher K."/>
            <person name="Chen G."/>
            <person name="Saunders D."/>
            <person name="Sodergren E.J."/>
            <person name="Davis P."/>
            <person name="Kerhornou A."/>
            <person name="Nie X."/>
            <person name="Hall N."/>
            <person name="Anjard C."/>
            <person name="Hemphill L."/>
            <person name="Bason N."/>
            <person name="Farbrother P."/>
            <person name="Desany B."/>
            <person name="Just E."/>
            <person name="Morio T."/>
            <person name="Rost R."/>
            <person name="Churcher C.M."/>
            <person name="Cooper J."/>
            <person name="Haydock S."/>
            <person name="van Driessche N."/>
            <person name="Cronin A."/>
            <person name="Goodhead I."/>
            <person name="Muzny D.M."/>
            <person name="Mourier T."/>
            <person name="Pain A."/>
            <person name="Lu M."/>
            <person name="Harper D."/>
            <person name="Lindsay R."/>
            <person name="Hauser H."/>
            <person name="James K.D."/>
            <person name="Quiles M."/>
            <person name="Madan Babu M."/>
            <person name="Saito T."/>
            <person name="Buchrieser C."/>
            <person name="Wardroper A."/>
            <person name="Felder M."/>
            <person name="Thangavelu M."/>
            <person name="Johnson D."/>
            <person name="Knights A."/>
            <person name="Loulseged H."/>
            <person name="Mungall K.L."/>
            <person name="Oliver K."/>
            <person name="Price C."/>
            <person name="Quail M.A."/>
            <person name="Urushihara H."/>
            <person name="Hernandez J."/>
            <person name="Rabbinowitsch E."/>
            <person name="Steffen D."/>
            <person name="Sanders M."/>
            <person name="Ma J."/>
            <person name="Kohara Y."/>
            <person name="Sharp S."/>
            <person name="Simmonds M.N."/>
            <person name="Spiegler S."/>
            <person name="Tivey A."/>
            <person name="Sugano S."/>
            <person name="White B."/>
            <person name="Walker D."/>
            <person name="Woodward J.R."/>
            <person name="Winckler T."/>
            <person name="Tanaka Y."/>
            <person name="Shaulsky G."/>
            <person name="Schleicher M."/>
            <person name="Weinstock G.M."/>
            <person name="Rosenthal A."/>
            <person name="Cox E.C."/>
            <person name="Chisholm R.L."/>
            <person name="Gibbs R.A."/>
            <person name="Loomis W.F."/>
            <person name="Platzer M."/>
            <person name="Kay R.R."/>
            <person name="Williams J.G."/>
            <person name="Dear P.H."/>
            <person name="Noegel A.A."/>
            <person name="Barrell B.G."/>
            <person name="Kuspa A."/>
        </authorList>
    </citation>
    <scope>NUCLEOTIDE SEQUENCE [LARGE SCALE GENOMIC DNA]</scope>
    <source>
        <strain>AX4</strain>
    </source>
</reference>
<reference key="2">
    <citation type="journal article" date="2006" name="PLoS Genet.">
        <title>The dictyostelium kinome -- analysis of the protein kinases from a simple model organism.</title>
        <authorList>
            <person name="Goldberg J.M."/>
            <person name="Manning G."/>
            <person name="Liu A."/>
            <person name="Fey P."/>
            <person name="Pilcher K.E."/>
            <person name="Xu Y."/>
            <person name="Smith J.L."/>
        </authorList>
    </citation>
    <scope>GENE FAMILY</scope>
    <scope>NOMENCLATURE</scope>
</reference>
<feature type="chain" id="PRO_0000341968" description="3-phosphoinositide-dependent protein kinase B">
    <location>
        <begin position="1"/>
        <end position="908"/>
    </location>
</feature>
<feature type="domain" description="Protein kinase" evidence="2">
    <location>
        <begin position="271"/>
        <end position="527"/>
    </location>
</feature>
<feature type="domain" description="PH">
    <location>
        <begin position="764"/>
        <end position="902"/>
    </location>
</feature>
<feature type="region of interest" description="Disordered" evidence="4">
    <location>
        <begin position="53"/>
        <end position="267"/>
    </location>
</feature>
<feature type="region of interest" description="PIF-pocket" evidence="1">
    <location>
        <begin position="302"/>
        <end position="346"/>
    </location>
</feature>
<feature type="region of interest" description="Disordered" evidence="4">
    <location>
        <begin position="538"/>
        <end position="560"/>
    </location>
</feature>
<feature type="region of interest" description="Disordered" evidence="4">
    <location>
        <begin position="606"/>
        <end position="755"/>
    </location>
</feature>
<feature type="compositionally biased region" description="Low complexity" evidence="4">
    <location>
        <begin position="53"/>
        <end position="170"/>
    </location>
</feature>
<feature type="compositionally biased region" description="Low complexity" evidence="4">
    <location>
        <begin position="179"/>
        <end position="189"/>
    </location>
</feature>
<feature type="compositionally biased region" description="Low complexity" evidence="4">
    <location>
        <begin position="200"/>
        <end position="216"/>
    </location>
</feature>
<feature type="compositionally biased region" description="Polar residues" evidence="4">
    <location>
        <begin position="250"/>
        <end position="262"/>
    </location>
</feature>
<feature type="compositionally biased region" description="Low complexity" evidence="4">
    <location>
        <begin position="607"/>
        <end position="684"/>
    </location>
</feature>
<feature type="compositionally biased region" description="Polar residues" evidence="4">
    <location>
        <begin position="696"/>
        <end position="709"/>
    </location>
</feature>
<feature type="compositionally biased region" description="Low complexity" evidence="4">
    <location>
        <begin position="710"/>
        <end position="741"/>
    </location>
</feature>
<feature type="active site" description="Proton acceptor" evidence="2 3">
    <location>
        <position position="394"/>
    </location>
</feature>
<feature type="binding site" evidence="1">
    <location>
        <begin position="281"/>
        <end position="283"/>
    </location>
    <ligand>
        <name>ATP</name>
        <dbReference type="ChEBI" id="CHEBI:30616"/>
    </ligand>
</feature>
<feature type="binding site" evidence="1">
    <location>
        <position position="300"/>
    </location>
    <ligand>
        <name>ATP</name>
        <dbReference type="ChEBI" id="CHEBI:30616"/>
    </ligand>
</feature>
<feature type="binding site" evidence="1">
    <location>
        <begin position="349"/>
        <end position="351"/>
    </location>
    <ligand>
        <name>ATP</name>
        <dbReference type="ChEBI" id="CHEBI:30616"/>
    </ligand>
</feature>
<feature type="binding site" evidence="1">
    <location>
        <position position="355"/>
    </location>
    <ligand>
        <name>ATP</name>
        <dbReference type="ChEBI" id="CHEBI:30616"/>
    </ligand>
</feature>
<feature type="binding site" evidence="1">
    <location>
        <position position="398"/>
    </location>
    <ligand>
        <name>ATP</name>
        <dbReference type="ChEBI" id="CHEBI:30616"/>
    </ligand>
</feature>
<feature type="binding site" evidence="1">
    <location>
        <position position="412"/>
    </location>
    <ligand>
        <name>ATP</name>
        <dbReference type="ChEBI" id="CHEBI:30616"/>
    </ligand>
</feature>
<organism>
    <name type="scientific">Dictyostelium discoideum</name>
    <name type="common">Social amoeba</name>
    <dbReference type="NCBI Taxonomy" id="44689"/>
    <lineage>
        <taxon>Eukaryota</taxon>
        <taxon>Amoebozoa</taxon>
        <taxon>Evosea</taxon>
        <taxon>Eumycetozoa</taxon>
        <taxon>Dictyostelia</taxon>
        <taxon>Dictyosteliales</taxon>
        <taxon>Dictyosteliaceae</taxon>
        <taxon>Dictyostelium</taxon>
    </lineage>
</organism>
<evidence type="ECO:0000250" key="1">
    <source>
        <dbReference type="UniProtKB" id="O15530"/>
    </source>
</evidence>
<evidence type="ECO:0000255" key="2">
    <source>
        <dbReference type="PROSITE-ProRule" id="PRU00159"/>
    </source>
</evidence>
<evidence type="ECO:0000255" key="3">
    <source>
        <dbReference type="PROSITE-ProRule" id="PRU10027"/>
    </source>
</evidence>
<evidence type="ECO:0000256" key="4">
    <source>
        <dbReference type="SAM" id="MobiDB-lite"/>
    </source>
</evidence>
<evidence type="ECO:0000305" key="5"/>
<gene>
    <name type="primary">pdkB</name>
    <name type="ORF">DDB_G0284489</name>
</gene>
<dbReference type="EC" id="2.7.11.1"/>
<dbReference type="EMBL" id="AAFI02000066">
    <property type="protein sequence ID" value="EAL65171.1"/>
    <property type="molecule type" value="Genomic_DNA"/>
</dbReference>
<dbReference type="RefSeq" id="XP_638523.1">
    <property type="nucleotide sequence ID" value="XM_633431.1"/>
</dbReference>
<dbReference type="SMR" id="Q54PK9"/>
<dbReference type="FunCoup" id="Q54PK9">
    <property type="interactions" value="215"/>
</dbReference>
<dbReference type="STRING" id="44689.Q54PK9"/>
<dbReference type="GlyGen" id="Q54PK9">
    <property type="glycosylation" value="1 site"/>
</dbReference>
<dbReference type="PaxDb" id="44689-DDB0216246"/>
<dbReference type="EnsemblProtists" id="EAL65171">
    <property type="protein sequence ID" value="EAL65171"/>
    <property type="gene ID" value="DDB_G0284489"/>
</dbReference>
<dbReference type="GeneID" id="8624616"/>
<dbReference type="KEGG" id="ddi:DDB_G0284489"/>
<dbReference type="dictyBase" id="DDB_G0284489">
    <property type="gene designation" value="pdkB"/>
</dbReference>
<dbReference type="VEuPathDB" id="AmoebaDB:DDB_G0284489"/>
<dbReference type="eggNOG" id="KOG0592">
    <property type="taxonomic scope" value="Eukaryota"/>
</dbReference>
<dbReference type="HOGENOM" id="CLU_000288_63_9_1"/>
<dbReference type="InParanoid" id="Q54PK9"/>
<dbReference type="OMA" id="RNANTVW"/>
<dbReference type="PRO" id="PR:Q54PK9"/>
<dbReference type="Proteomes" id="UP000002195">
    <property type="component" value="Chromosome 4"/>
</dbReference>
<dbReference type="GO" id="GO:0005829">
    <property type="term" value="C:cytosol"/>
    <property type="evidence" value="ECO:0000314"/>
    <property type="project" value="dictyBase"/>
</dbReference>
<dbReference type="GO" id="GO:0004676">
    <property type="term" value="F:3-phosphoinositide-dependent protein kinase activity"/>
    <property type="evidence" value="ECO:0000250"/>
    <property type="project" value="dictyBase"/>
</dbReference>
<dbReference type="GO" id="GO:0005524">
    <property type="term" value="F:ATP binding"/>
    <property type="evidence" value="ECO:0007669"/>
    <property type="project" value="UniProtKB-KW"/>
</dbReference>
<dbReference type="GO" id="GO:0030295">
    <property type="term" value="F:protein kinase activator activity"/>
    <property type="evidence" value="ECO:0000314"/>
    <property type="project" value="dictyBase"/>
</dbReference>
<dbReference type="GO" id="GO:0004672">
    <property type="term" value="F:protein kinase activity"/>
    <property type="evidence" value="ECO:0000316"/>
    <property type="project" value="dictyBase"/>
</dbReference>
<dbReference type="GO" id="GO:0106310">
    <property type="term" value="F:protein serine kinase activity"/>
    <property type="evidence" value="ECO:0007669"/>
    <property type="project" value="RHEA"/>
</dbReference>
<dbReference type="GO" id="GO:0004674">
    <property type="term" value="F:protein serine/threonine kinase activity"/>
    <property type="evidence" value="ECO:0000318"/>
    <property type="project" value="GO_Central"/>
</dbReference>
<dbReference type="GO" id="GO:0043327">
    <property type="term" value="P:chemotaxis to cAMP"/>
    <property type="evidence" value="ECO:0000316"/>
    <property type="project" value="dictyBase"/>
</dbReference>
<dbReference type="GO" id="GO:0035556">
    <property type="term" value="P:intracellular signal transduction"/>
    <property type="evidence" value="ECO:0000318"/>
    <property type="project" value="GO_Central"/>
</dbReference>
<dbReference type="GO" id="GO:0051897">
    <property type="term" value="P:positive regulation of phosphatidylinositol 3-kinase/protein kinase B signal transduction"/>
    <property type="evidence" value="ECO:0000316"/>
    <property type="project" value="dictyBase"/>
</dbReference>
<dbReference type="GO" id="GO:0030587">
    <property type="term" value="P:sorocarp development"/>
    <property type="evidence" value="ECO:0000316"/>
    <property type="project" value="dictyBase"/>
</dbReference>
<dbReference type="CDD" id="cd01262">
    <property type="entry name" value="PH_PDK1"/>
    <property type="match status" value="1"/>
</dbReference>
<dbReference type="CDD" id="cd05581">
    <property type="entry name" value="STKc_PDK1"/>
    <property type="match status" value="1"/>
</dbReference>
<dbReference type="FunFam" id="3.30.200.20:FF:000191">
    <property type="entry name" value="3-phosphoinositide-dependent protein kinase 2-like"/>
    <property type="match status" value="1"/>
</dbReference>
<dbReference type="FunFam" id="1.10.510.10:FF:000833">
    <property type="entry name" value="AGC family protein kinase"/>
    <property type="match status" value="1"/>
</dbReference>
<dbReference type="FunFam" id="2.30.29.30:FF:000390">
    <property type="entry name" value="AGC/PDK1 protein kinase, variant 1"/>
    <property type="match status" value="1"/>
</dbReference>
<dbReference type="Gene3D" id="3.30.200.20">
    <property type="entry name" value="Phosphorylase Kinase, domain 1"/>
    <property type="match status" value="1"/>
</dbReference>
<dbReference type="Gene3D" id="2.30.29.30">
    <property type="entry name" value="Pleckstrin-homology domain (PH domain)/Phosphotyrosine-binding domain (PTB)"/>
    <property type="match status" value="1"/>
</dbReference>
<dbReference type="Gene3D" id="1.10.510.10">
    <property type="entry name" value="Transferase(Phosphotransferase) domain 1"/>
    <property type="match status" value="1"/>
</dbReference>
<dbReference type="InterPro" id="IPR011009">
    <property type="entry name" value="Kinase-like_dom_sf"/>
</dbReference>
<dbReference type="InterPro" id="IPR033931">
    <property type="entry name" value="PDK1-typ_PH"/>
</dbReference>
<dbReference type="InterPro" id="IPR039046">
    <property type="entry name" value="PDPK1"/>
</dbReference>
<dbReference type="InterPro" id="IPR011993">
    <property type="entry name" value="PH-like_dom_sf"/>
</dbReference>
<dbReference type="InterPro" id="IPR000719">
    <property type="entry name" value="Prot_kinase_dom"/>
</dbReference>
<dbReference type="InterPro" id="IPR017441">
    <property type="entry name" value="Protein_kinase_ATP_BS"/>
</dbReference>
<dbReference type="InterPro" id="IPR008271">
    <property type="entry name" value="Ser/Thr_kinase_AS"/>
</dbReference>
<dbReference type="InterPro" id="IPR050236">
    <property type="entry name" value="Ser_Thr_kinase_AGC"/>
</dbReference>
<dbReference type="PANTHER" id="PTHR24356:SF232">
    <property type="entry name" value="3-PHOSPHOINOSITIDE-DEPENDENT PROTEIN KINASE B"/>
    <property type="match status" value="1"/>
</dbReference>
<dbReference type="PANTHER" id="PTHR24356">
    <property type="entry name" value="SERINE/THREONINE-PROTEIN KINASE"/>
    <property type="match status" value="1"/>
</dbReference>
<dbReference type="Pfam" id="PF14593">
    <property type="entry name" value="PH_3"/>
    <property type="match status" value="1"/>
</dbReference>
<dbReference type="Pfam" id="PF00069">
    <property type="entry name" value="Pkinase"/>
    <property type="match status" value="1"/>
</dbReference>
<dbReference type="SMART" id="SM00220">
    <property type="entry name" value="S_TKc"/>
    <property type="match status" value="1"/>
</dbReference>
<dbReference type="SUPFAM" id="SSF50729">
    <property type="entry name" value="PH domain-like"/>
    <property type="match status" value="1"/>
</dbReference>
<dbReference type="SUPFAM" id="SSF56112">
    <property type="entry name" value="Protein kinase-like (PK-like)"/>
    <property type="match status" value="1"/>
</dbReference>
<dbReference type="PROSITE" id="PS00107">
    <property type="entry name" value="PROTEIN_KINASE_ATP"/>
    <property type="match status" value="1"/>
</dbReference>
<dbReference type="PROSITE" id="PS50011">
    <property type="entry name" value="PROTEIN_KINASE_DOM"/>
    <property type="match status" value="1"/>
</dbReference>
<dbReference type="PROSITE" id="PS00108">
    <property type="entry name" value="PROTEIN_KINASE_ST"/>
    <property type="match status" value="1"/>
</dbReference>
<name>PDPKB_DICDI</name>
<sequence>MINGRYQKEDVVNNNNNLNLNLIEKTLNDLTIKNNTNINNNNTNNKNTNYYNNNNFNNNNNNNNNNNNNNNNINNNNNNNKYLNNSHNNNNNNNNNNNNNNNNNNNNNNNEINNNNNNVLSHSSLSGKGGSTTYETTSYTTSITSSRDTGTISTSYESSSSSSSSSSSSLYDDDEYSDYSDSSDSIDSYVNHRQALSKSQQQQHLQQQQDQPQPLHSSMGAISNEKPPSPTNQQQQQQHHHPKHNIELPKTSSFGLQPNSSIPHKKSRSDFDFIRTIGKGAYGKVKLVIEKETQLIFASKILNKKLIIKEKKAKYVNTEKTILDSLDNPNIVKLFYTFQDENNLYFILEYCPNGDLLGALKKAGCFSIDVVRFYAAEILIALEYLHGKGIAHRDLKPENILLGKNQHLKLSDFGSAKQLSIGSHHKGSRSGSFCGTAEYVCPELLTEKSAGVEADIWSYGCLLYQLVSGKLPFKGFNEYQTFLLITKREFSYPDNFDKCCMNLIDQLLDLDPYKRPTISEIKNHEFFSSIQDWSSIPSQTPPPIEQMVPQSPFPSPNSSLRLKKRSLSVGSPINSSLTYLSQPPIKPLNLDNSNIDYNDFENNQIISNNNNNNNNTTTTTTTTTTSANTSGSTNNTLYFTSPNVTSPPTSMSSNNTPRYINPLPTQSTTTTTTKPAYSSTPSSTILKSTPPPPILSSCSSNNLLGKSSNQQYQPFQFHQQQQQQQQQQQRERSSTTTPSPTFLSNHHNQHQKNLQQSFSSIDKSSFSTSSPMSSPRILLKPTELVLMDKDRKRNIREQQQIDQYQWSRFLLPNDEIILACGITEKRSGLITKKRQLIITDTPRIFYVDPVKMTQKGEITVDGSLSAQQKSSKHFIINSKGRSRHFYDLDGQSKLWVDLINELNMLSFK</sequence>
<accession>Q54PK9</accession>
<proteinExistence type="inferred from homology"/>
<keyword id="KW-0067">ATP-binding</keyword>
<keyword id="KW-0418">Kinase</keyword>
<keyword id="KW-0547">Nucleotide-binding</keyword>
<keyword id="KW-1185">Reference proteome</keyword>
<keyword id="KW-0723">Serine/threonine-protein kinase</keyword>
<keyword id="KW-0808">Transferase</keyword>
<protein>
    <recommendedName>
        <fullName>3-phosphoinositide-dependent protein kinase B</fullName>
        <ecNumber>2.7.11.1</ecNumber>
    </recommendedName>
    <alternativeName>
        <fullName>Pdk-class protein kinase b</fullName>
    </alternativeName>
</protein>